<accession>A4SFT4</accession>
<name>MDH_CHLPM</name>
<sequence length="309" mass="32966">MKITVIGAGHVGATAALRIAEKQLAREVVLIDIIEGIPQGKALDMYESGPVALFDTMVKGSNDYADSADSDIVLITAGLARKPGMSREDLLMKNTAIIKDVTTQVMRYSVNPILIMVSNPLDVMTFVAHTVSGLKPERVIGMAGVLDTARFRSFIAEALNVSMQDINAFVLGGHGDSMVPVVKYTNVAGIPLTELLPKETIDAIVERTKNGGIEIVNHLKTGSAFYAPAASAVEMIESIVKDRKRILPCTTCLGGQYGINNVFCGVPVKLGKEGVEQILEINLDDNELKALQASAAIVEKNCKSLASAI</sequence>
<evidence type="ECO:0000255" key="1">
    <source>
        <dbReference type="HAMAP-Rule" id="MF_00487"/>
    </source>
</evidence>
<organism>
    <name type="scientific">Chlorobium phaeovibrioides (strain DSM 265 / 1930)</name>
    <name type="common">Prosthecochloris vibrioformis (strain DSM 265)</name>
    <dbReference type="NCBI Taxonomy" id="290318"/>
    <lineage>
        <taxon>Bacteria</taxon>
        <taxon>Pseudomonadati</taxon>
        <taxon>Chlorobiota</taxon>
        <taxon>Chlorobiia</taxon>
        <taxon>Chlorobiales</taxon>
        <taxon>Chlorobiaceae</taxon>
        <taxon>Chlorobium/Pelodictyon group</taxon>
        <taxon>Chlorobium</taxon>
    </lineage>
</organism>
<feature type="chain" id="PRO_1000081364" description="Malate dehydrogenase">
    <location>
        <begin position="1"/>
        <end position="309"/>
    </location>
</feature>
<feature type="active site" description="Proton acceptor" evidence="1">
    <location>
        <position position="174"/>
    </location>
</feature>
<feature type="binding site" evidence="1">
    <location>
        <begin position="7"/>
        <end position="12"/>
    </location>
    <ligand>
        <name>NAD(+)</name>
        <dbReference type="ChEBI" id="CHEBI:57540"/>
    </ligand>
</feature>
<feature type="binding site" evidence="1">
    <location>
        <position position="32"/>
    </location>
    <ligand>
        <name>NAD(+)</name>
        <dbReference type="ChEBI" id="CHEBI:57540"/>
    </ligand>
</feature>
<feature type="binding site" evidence="1">
    <location>
        <position position="81"/>
    </location>
    <ligand>
        <name>substrate</name>
    </ligand>
</feature>
<feature type="binding site" evidence="1">
    <location>
        <position position="87"/>
    </location>
    <ligand>
        <name>substrate</name>
    </ligand>
</feature>
<feature type="binding site" evidence="1">
    <location>
        <position position="94"/>
    </location>
    <ligand>
        <name>NAD(+)</name>
        <dbReference type="ChEBI" id="CHEBI:57540"/>
    </ligand>
</feature>
<feature type="binding site" evidence="1">
    <location>
        <begin position="117"/>
        <end position="119"/>
    </location>
    <ligand>
        <name>NAD(+)</name>
        <dbReference type="ChEBI" id="CHEBI:57540"/>
    </ligand>
</feature>
<feature type="binding site" evidence="1">
    <location>
        <position position="119"/>
    </location>
    <ligand>
        <name>substrate</name>
    </ligand>
</feature>
<feature type="binding site" evidence="1">
    <location>
        <position position="150"/>
    </location>
    <ligand>
        <name>substrate</name>
    </ligand>
</feature>
<proteinExistence type="inferred from homology"/>
<protein>
    <recommendedName>
        <fullName evidence="1">Malate dehydrogenase</fullName>
        <ecNumber evidence="1">1.1.1.37</ecNumber>
    </recommendedName>
</protein>
<gene>
    <name evidence="1" type="primary">mdh</name>
    <name type="ordered locus">Cvib_1331</name>
</gene>
<keyword id="KW-0520">NAD</keyword>
<keyword id="KW-0560">Oxidoreductase</keyword>
<keyword id="KW-0816">Tricarboxylic acid cycle</keyword>
<comment type="function">
    <text evidence="1">Catalyzes the reversible oxidation of malate to oxaloacetate.</text>
</comment>
<comment type="catalytic activity">
    <reaction evidence="1">
        <text>(S)-malate + NAD(+) = oxaloacetate + NADH + H(+)</text>
        <dbReference type="Rhea" id="RHEA:21432"/>
        <dbReference type="ChEBI" id="CHEBI:15378"/>
        <dbReference type="ChEBI" id="CHEBI:15589"/>
        <dbReference type="ChEBI" id="CHEBI:16452"/>
        <dbReference type="ChEBI" id="CHEBI:57540"/>
        <dbReference type="ChEBI" id="CHEBI:57945"/>
        <dbReference type="EC" id="1.1.1.37"/>
    </reaction>
</comment>
<comment type="similarity">
    <text evidence="1">Belongs to the LDH/MDH superfamily. MDH type 3 family.</text>
</comment>
<reference key="1">
    <citation type="submission" date="2007-03" db="EMBL/GenBank/DDBJ databases">
        <title>Complete sequence of Prosthecochloris vibrioformis DSM 265.</title>
        <authorList>
            <consortium name="US DOE Joint Genome Institute"/>
            <person name="Copeland A."/>
            <person name="Lucas S."/>
            <person name="Lapidus A."/>
            <person name="Barry K."/>
            <person name="Detter J.C."/>
            <person name="Glavina del Rio T."/>
            <person name="Hammon N."/>
            <person name="Israni S."/>
            <person name="Pitluck S."/>
            <person name="Schmutz J."/>
            <person name="Larimer F."/>
            <person name="Land M."/>
            <person name="Hauser L."/>
            <person name="Mikhailova N."/>
            <person name="Li T."/>
            <person name="Overmann J."/>
            <person name="Schuster S.C."/>
            <person name="Bryant D.A."/>
            <person name="Richardson P."/>
        </authorList>
    </citation>
    <scope>NUCLEOTIDE SEQUENCE [LARGE SCALE GENOMIC DNA]</scope>
    <source>
        <strain>DSM 265 / 1930</strain>
    </source>
</reference>
<dbReference type="EC" id="1.1.1.37" evidence="1"/>
<dbReference type="EMBL" id="CP000607">
    <property type="protein sequence ID" value="ABP37343.1"/>
    <property type="molecule type" value="Genomic_DNA"/>
</dbReference>
<dbReference type="SMR" id="A4SFT4"/>
<dbReference type="STRING" id="290318.Cvib_1331"/>
<dbReference type="KEGG" id="pvi:Cvib_1331"/>
<dbReference type="eggNOG" id="COG0039">
    <property type="taxonomic scope" value="Bacteria"/>
</dbReference>
<dbReference type="HOGENOM" id="CLU_045401_2_1_10"/>
<dbReference type="OrthoDB" id="9802969at2"/>
<dbReference type="GO" id="GO:0004459">
    <property type="term" value="F:L-lactate dehydrogenase activity"/>
    <property type="evidence" value="ECO:0007669"/>
    <property type="project" value="TreeGrafter"/>
</dbReference>
<dbReference type="GO" id="GO:0030060">
    <property type="term" value="F:L-malate dehydrogenase (NAD+) activity"/>
    <property type="evidence" value="ECO:0007669"/>
    <property type="project" value="UniProtKB-UniRule"/>
</dbReference>
<dbReference type="GO" id="GO:0006089">
    <property type="term" value="P:lactate metabolic process"/>
    <property type="evidence" value="ECO:0007669"/>
    <property type="project" value="TreeGrafter"/>
</dbReference>
<dbReference type="GO" id="GO:0006099">
    <property type="term" value="P:tricarboxylic acid cycle"/>
    <property type="evidence" value="ECO:0007669"/>
    <property type="project" value="UniProtKB-UniRule"/>
</dbReference>
<dbReference type="CDD" id="cd01339">
    <property type="entry name" value="LDH-like_MDH"/>
    <property type="match status" value="1"/>
</dbReference>
<dbReference type="FunFam" id="3.40.50.720:FF:000018">
    <property type="entry name" value="Malate dehydrogenase"/>
    <property type="match status" value="1"/>
</dbReference>
<dbReference type="FunFam" id="3.90.110.10:FF:000004">
    <property type="entry name" value="Malate dehydrogenase"/>
    <property type="match status" value="1"/>
</dbReference>
<dbReference type="Gene3D" id="3.90.110.10">
    <property type="entry name" value="Lactate dehydrogenase/glycoside hydrolase, family 4, C-terminal"/>
    <property type="match status" value="1"/>
</dbReference>
<dbReference type="Gene3D" id="3.40.50.720">
    <property type="entry name" value="NAD(P)-binding Rossmann-like Domain"/>
    <property type="match status" value="1"/>
</dbReference>
<dbReference type="HAMAP" id="MF_00487">
    <property type="entry name" value="Malate_dehydrog_3"/>
    <property type="match status" value="1"/>
</dbReference>
<dbReference type="InterPro" id="IPR001557">
    <property type="entry name" value="L-lactate/malate_DH"/>
</dbReference>
<dbReference type="InterPro" id="IPR022383">
    <property type="entry name" value="Lactate/malate_DH_C"/>
</dbReference>
<dbReference type="InterPro" id="IPR001236">
    <property type="entry name" value="Lactate/malate_DH_N"/>
</dbReference>
<dbReference type="InterPro" id="IPR015955">
    <property type="entry name" value="Lactate_DH/Glyco_Ohase_4_C"/>
</dbReference>
<dbReference type="InterPro" id="IPR011275">
    <property type="entry name" value="Malate_DH_type3"/>
</dbReference>
<dbReference type="InterPro" id="IPR036291">
    <property type="entry name" value="NAD(P)-bd_dom_sf"/>
</dbReference>
<dbReference type="NCBIfam" id="TIGR01763">
    <property type="entry name" value="MalateDH_bact"/>
    <property type="match status" value="1"/>
</dbReference>
<dbReference type="NCBIfam" id="NF004863">
    <property type="entry name" value="PRK06223.1"/>
    <property type="match status" value="1"/>
</dbReference>
<dbReference type="PANTHER" id="PTHR43128">
    <property type="entry name" value="L-2-HYDROXYCARBOXYLATE DEHYDROGENASE (NAD(P)(+))"/>
    <property type="match status" value="1"/>
</dbReference>
<dbReference type="PANTHER" id="PTHR43128:SF16">
    <property type="entry name" value="L-LACTATE DEHYDROGENASE"/>
    <property type="match status" value="1"/>
</dbReference>
<dbReference type="Pfam" id="PF02866">
    <property type="entry name" value="Ldh_1_C"/>
    <property type="match status" value="1"/>
</dbReference>
<dbReference type="Pfam" id="PF00056">
    <property type="entry name" value="Ldh_1_N"/>
    <property type="match status" value="1"/>
</dbReference>
<dbReference type="PIRSF" id="PIRSF000102">
    <property type="entry name" value="Lac_mal_DH"/>
    <property type="match status" value="1"/>
</dbReference>
<dbReference type="PRINTS" id="PR00086">
    <property type="entry name" value="LLDHDRGNASE"/>
</dbReference>
<dbReference type="SUPFAM" id="SSF56327">
    <property type="entry name" value="LDH C-terminal domain-like"/>
    <property type="match status" value="1"/>
</dbReference>
<dbReference type="SUPFAM" id="SSF51735">
    <property type="entry name" value="NAD(P)-binding Rossmann-fold domains"/>
    <property type="match status" value="1"/>
</dbReference>